<reference key="1">
    <citation type="journal article" date="2011" name="Stand. Genomic Sci.">
        <title>Complete genome sequence of 'Thioalkalivibrio sulfidophilus' HL-EbGr7.</title>
        <authorList>
            <person name="Muyzer G."/>
            <person name="Sorokin D.Y."/>
            <person name="Mavromatis K."/>
            <person name="Lapidus A."/>
            <person name="Clum A."/>
            <person name="Ivanova N."/>
            <person name="Pati A."/>
            <person name="d'Haeseleer P."/>
            <person name="Woyke T."/>
            <person name="Kyrpides N.C."/>
        </authorList>
    </citation>
    <scope>NUCLEOTIDE SEQUENCE [LARGE SCALE GENOMIC DNA]</scope>
    <source>
        <strain>HL-EbGR7</strain>
    </source>
</reference>
<evidence type="ECO:0000255" key="1">
    <source>
        <dbReference type="HAMAP-Rule" id="MF_00713"/>
    </source>
</evidence>
<keyword id="KW-0560">Oxidoreductase</keyword>
<keyword id="KW-0663">Pyridoxal phosphate</keyword>
<keyword id="KW-1185">Reference proteome</keyword>
<feature type="chain" id="PRO_1000148002" description="Probable glycine dehydrogenase (decarboxylating) subunit 2">
    <location>
        <begin position="1"/>
        <end position="496"/>
    </location>
</feature>
<feature type="modified residue" description="N6-(pyridoxal phosphate)lysine" evidence="1">
    <location>
        <position position="265"/>
    </location>
</feature>
<protein>
    <recommendedName>
        <fullName evidence="1">Probable glycine dehydrogenase (decarboxylating) subunit 2</fullName>
        <ecNumber evidence="1">1.4.4.2</ecNumber>
    </recommendedName>
    <alternativeName>
        <fullName evidence="1">Glycine cleavage system P-protein subunit 2</fullName>
    </alternativeName>
    <alternativeName>
        <fullName evidence="1">Glycine decarboxylase subunit 2</fullName>
    </alternativeName>
    <alternativeName>
        <fullName evidence="1">Glycine dehydrogenase (aminomethyl-transferring) subunit 2</fullName>
    </alternativeName>
</protein>
<organism>
    <name type="scientific">Thioalkalivibrio sulfidiphilus (strain HL-EbGR7)</name>
    <dbReference type="NCBI Taxonomy" id="396588"/>
    <lineage>
        <taxon>Bacteria</taxon>
        <taxon>Pseudomonadati</taxon>
        <taxon>Pseudomonadota</taxon>
        <taxon>Gammaproteobacteria</taxon>
        <taxon>Chromatiales</taxon>
        <taxon>Ectothiorhodospiraceae</taxon>
        <taxon>Thioalkalivibrio</taxon>
    </lineage>
</organism>
<gene>
    <name evidence="1" type="primary">gcvPB</name>
    <name type="ordered locus">Tgr7_2755</name>
</gene>
<name>GCSPB_THISH</name>
<proteinExistence type="inferred from homology"/>
<sequence length="496" mass="54429">MLIFERSRPGRGATAQAPLREATVSGLPERFRRGTRAPLPELSELDVVRHYTRLSQKNFSIDTQFYPLGSCTMKYNPRACNSLAMLPGFLGRHPHAPDTHSQGFLACMFELQEMLRDVTGMKGGVSLTPMAGAQGEFAGVAMIRAYHDARKDTARTEILVPDAAHGTNPATATMCGYTVKEIPTDDSGDVDMEALKAALGPHTAGIMLTNPSTLGVFERRIKEIADLVHQAGGLLYYDGANLNAILGKVRPGDMGFDVIHMNLHKTFSTPHGGGGPGAGAVGVSERLRPFMPIPVVAKEGERYRFMTEKDLPQSIGRLSAFAGNAGVLLRAYVYMRMLGRAGMPRVAEFSTLNANYVMARLREKGFELAFPGRRATHEFIVTLKRLAKDTEVTAMDVAKRLLDFNYHAPTTYFPLLVPECLLIEPTETESKETLDGFVEAMAEILEEARTSPDKVKGAPYTQPNRRFDEVRAARELDVAWRPGAALDEVAEQGRTD</sequence>
<dbReference type="EC" id="1.4.4.2" evidence="1"/>
<dbReference type="EMBL" id="CP001339">
    <property type="protein sequence ID" value="ACL73829.1"/>
    <property type="molecule type" value="Genomic_DNA"/>
</dbReference>
<dbReference type="RefSeq" id="WP_012639304.1">
    <property type="nucleotide sequence ID" value="NC_011901.1"/>
</dbReference>
<dbReference type="SMR" id="B8GN14"/>
<dbReference type="STRING" id="396588.Tgr7_2755"/>
<dbReference type="KEGG" id="tgr:Tgr7_2755"/>
<dbReference type="eggNOG" id="COG1003">
    <property type="taxonomic scope" value="Bacteria"/>
</dbReference>
<dbReference type="HOGENOM" id="CLU_004620_5_0_6"/>
<dbReference type="OrthoDB" id="9801272at2"/>
<dbReference type="Proteomes" id="UP000002383">
    <property type="component" value="Chromosome"/>
</dbReference>
<dbReference type="GO" id="GO:0005829">
    <property type="term" value="C:cytosol"/>
    <property type="evidence" value="ECO:0007669"/>
    <property type="project" value="TreeGrafter"/>
</dbReference>
<dbReference type="GO" id="GO:0005960">
    <property type="term" value="C:glycine cleavage complex"/>
    <property type="evidence" value="ECO:0007669"/>
    <property type="project" value="TreeGrafter"/>
</dbReference>
<dbReference type="GO" id="GO:0016594">
    <property type="term" value="F:glycine binding"/>
    <property type="evidence" value="ECO:0007669"/>
    <property type="project" value="TreeGrafter"/>
</dbReference>
<dbReference type="GO" id="GO:0004375">
    <property type="term" value="F:glycine dehydrogenase (decarboxylating) activity"/>
    <property type="evidence" value="ECO:0007669"/>
    <property type="project" value="UniProtKB-EC"/>
</dbReference>
<dbReference type="GO" id="GO:0030170">
    <property type="term" value="F:pyridoxal phosphate binding"/>
    <property type="evidence" value="ECO:0007669"/>
    <property type="project" value="TreeGrafter"/>
</dbReference>
<dbReference type="GO" id="GO:0019464">
    <property type="term" value="P:glycine decarboxylation via glycine cleavage system"/>
    <property type="evidence" value="ECO:0007669"/>
    <property type="project" value="UniProtKB-UniRule"/>
</dbReference>
<dbReference type="FunFam" id="3.40.640.10:FF:000224">
    <property type="entry name" value="Probable glycine dehydrogenase (decarboxylating) subunit 2"/>
    <property type="match status" value="1"/>
</dbReference>
<dbReference type="FunFam" id="3.90.1150.10:FF:000014">
    <property type="entry name" value="Probable glycine dehydrogenase (decarboxylating) subunit 2"/>
    <property type="match status" value="1"/>
</dbReference>
<dbReference type="Gene3D" id="6.20.440.10">
    <property type="match status" value="1"/>
</dbReference>
<dbReference type="Gene3D" id="3.90.1150.10">
    <property type="entry name" value="Aspartate Aminotransferase, domain 1"/>
    <property type="match status" value="1"/>
</dbReference>
<dbReference type="Gene3D" id="3.40.640.10">
    <property type="entry name" value="Type I PLP-dependent aspartate aminotransferase-like (Major domain)"/>
    <property type="match status" value="1"/>
</dbReference>
<dbReference type="HAMAP" id="MF_00713">
    <property type="entry name" value="GcvPB"/>
    <property type="match status" value="1"/>
</dbReference>
<dbReference type="InterPro" id="IPR000192">
    <property type="entry name" value="Aminotrans_V_dom"/>
</dbReference>
<dbReference type="InterPro" id="IPR023012">
    <property type="entry name" value="GcvPB"/>
</dbReference>
<dbReference type="InterPro" id="IPR049316">
    <property type="entry name" value="GDC-P_C"/>
</dbReference>
<dbReference type="InterPro" id="IPR020581">
    <property type="entry name" value="GDC_P"/>
</dbReference>
<dbReference type="InterPro" id="IPR015424">
    <property type="entry name" value="PyrdxlP-dep_Trfase"/>
</dbReference>
<dbReference type="InterPro" id="IPR015421">
    <property type="entry name" value="PyrdxlP-dep_Trfase_major"/>
</dbReference>
<dbReference type="InterPro" id="IPR015422">
    <property type="entry name" value="PyrdxlP-dep_Trfase_small"/>
</dbReference>
<dbReference type="NCBIfam" id="NF003346">
    <property type="entry name" value="PRK04366.1"/>
    <property type="match status" value="1"/>
</dbReference>
<dbReference type="PANTHER" id="PTHR11773:SF1">
    <property type="entry name" value="GLYCINE DEHYDROGENASE (DECARBOXYLATING), MITOCHONDRIAL"/>
    <property type="match status" value="1"/>
</dbReference>
<dbReference type="PANTHER" id="PTHR11773">
    <property type="entry name" value="GLYCINE DEHYDROGENASE, DECARBOXYLATING"/>
    <property type="match status" value="1"/>
</dbReference>
<dbReference type="Pfam" id="PF00266">
    <property type="entry name" value="Aminotran_5"/>
    <property type="match status" value="1"/>
</dbReference>
<dbReference type="Pfam" id="PF21478">
    <property type="entry name" value="GcvP2_C"/>
    <property type="match status" value="1"/>
</dbReference>
<dbReference type="SUPFAM" id="SSF53383">
    <property type="entry name" value="PLP-dependent transferases"/>
    <property type="match status" value="1"/>
</dbReference>
<comment type="function">
    <text evidence="1">The glycine cleavage system catalyzes the degradation of glycine. The P protein binds the alpha-amino group of glycine through its pyridoxal phosphate cofactor; CO(2) is released and the remaining methylamine moiety is then transferred to the lipoamide cofactor of the H protein.</text>
</comment>
<comment type="catalytic activity">
    <reaction evidence="1">
        <text>N(6)-[(R)-lipoyl]-L-lysyl-[glycine-cleavage complex H protein] + glycine + H(+) = N(6)-[(R)-S(8)-aminomethyldihydrolipoyl]-L-lysyl-[glycine-cleavage complex H protein] + CO2</text>
        <dbReference type="Rhea" id="RHEA:24304"/>
        <dbReference type="Rhea" id="RHEA-COMP:10494"/>
        <dbReference type="Rhea" id="RHEA-COMP:10495"/>
        <dbReference type="ChEBI" id="CHEBI:15378"/>
        <dbReference type="ChEBI" id="CHEBI:16526"/>
        <dbReference type="ChEBI" id="CHEBI:57305"/>
        <dbReference type="ChEBI" id="CHEBI:83099"/>
        <dbReference type="ChEBI" id="CHEBI:83143"/>
        <dbReference type="EC" id="1.4.4.2"/>
    </reaction>
</comment>
<comment type="cofactor">
    <cofactor evidence="1">
        <name>pyridoxal 5'-phosphate</name>
        <dbReference type="ChEBI" id="CHEBI:597326"/>
    </cofactor>
</comment>
<comment type="subunit">
    <text evidence="1">The glycine cleavage system is composed of four proteins: P, T, L and H. In this organism, the P 'protein' is a heterodimer of two subunits.</text>
</comment>
<comment type="similarity">
    <text evidence="1">Belongs to the GcvP family. C-terminal subunit subfamily.</text>
</comment>
<accession>B8GN14</accession>